<proteinExistence type="evidence at transcript level"/>
<keyword id="KW-0010">Activator</keyword>
<keyword id="KW-0238">DNA-binding</keyword>
<keyword id="KW-0936">Ethylene signaling pathway</keyword>
<keyword id="KW-0539">Nucleus</keyword>
<keyword id="KW-0611">Plant defense</keyword>
<keyword id="KW-1185">Reference proteome</keyword>
<keyword id="KW-0346">Stress response</keyword>
<keyword id="KW-0804">Transcription</keyword>
<keyword id="KW-0805">Transcription regulation</keyword>
<reference key="1">
    <citation type="journal article" date="2000" name="Nature">
        <title>Sequence and analysis of chromosome 1 of the plant Arabidopsis thaliana.</title>
        <authorList>
            <person name="Theologis A."/>
            <person name="Ecker J.R."/>
            <person name="Palm C.J."/>
            <person name="Federspiel N.A."/>
            <person name="Kaul S."/>
            <person name="White O."/>
            <person name="Alonso J."/>
            <person name="Altafi H."/>
            <person name="Araujo R."/>
            <person name="Bowman C.L."/>
            <person name="Brooks S.Y."/>
            <person name="Buehler E."/>
            <person name="Chan A."/>
            <person name="Chao Q."/>
            <person name="Chen H."/>
            <person name="Cheuk R.F."/>
            <person name="Chin C.W."/>
            <person name="Chung M.K."/>
            <person name="Conn L."/>
            <person name="Conway A.B."/>
            <person name="Conway A.R."/>
            <person name="Creasy T.H."/>
            <person name="Dewar K."/>
            <person name="Dunn P."/>
            <person name="Etgu P."/>
            <person name="Feldblyum T.V."/>
            <person name="Feng J.-D."/>
            <person name="Fong B."/>
            <person name="Fujii C.Y."/>
            <person name="Gill J.E."/>
            <person name="Goldsmith A.D."/>
            <person name="Haas B."/>
            <person name="Hansen N.F."/>
            <person name="Hughes B."/>
            <person name="Huizar L."/>
            <person name="Hunter J.L."/>
            <person name="Jenkins J."/>
            <person name="Johnson-Hopson C."/>
            <person name="Khan S."/>
            <person name="Khaykin E."/>
            <person name="Kim C.J."/>
            <person name="Koo H.L."/>
            <person name="Kremenetskaia I."/>
            <person name="Kurtz D.B."/>
            <person name="Kwan A."/>
            <person name="Lam B."/>
            <person name="Langin-Hooper S."/>
            <person name="Lee A."/>
            <person name="Lee J.M."/>
            <person name="Lenz C.A."/>
            <person name="Li J.H."/>
            <person name="Li Y.-P."/>
            <person name="Lin X."/>
            <person name="Liu S.X."/>
            <person name="Liu Z.A."/>
            <person name="Luros J.S."/>
            <person name="Maiti R."/>
            <person name="Marziali A."/>
            <person name="Militscher J."/>
            <person name="Miranda M."/>
            <person name="Nguyen M."/>
            <person name="Nierman W.C."/>
            <person name="Osborne B.I."/>
            <person name="Pai G."/>
            <person name="Peterson J."/>
            <person name="Pham P.K."/>
            <person name="Rizzo M."/>
            <person name="Rooney T."/>
            <person name="Rowley D."/>
            <person name="Sakano H."/>
            <person name="Salzberg S.L."/>
            <person name="Schwartz J.R."/>
            <person name="Shinn P."/>
            <person name="Southwick A.M."/>
            <person name="Sun H."/>
            <person name="Tallon L.J."/>
            <person name="Tambunga G."/>
            <person name="Toriumi M.J."/>
            <person name="Town C.D."/>
            <person name="Utterback T."/>
            <person name="Van Aken S."/>
            <person name="Vaysberg M."/>
            <person name="Vysotskaia V.S."/>
            <person name="Walker M."/>
            <person name="Wu D."/>
            <person name="Yu G."/>
            <person name="Fraser C.M."/>
            <person name="Venter J.C."/>
            <person name="Davis R.W."/>
        </authorList>
    </citation>
    <scope>NUCLEOTIDE SEQUENCE [LARGE SCALE GENOMIC DNA]</scope>
    <source>
        <strain>cv. Columbia</strain>
    </source>
</reference>
<reference key="2">
    <citation type="journal article" date="2017" name="Plant J.">
        <title>Araport11: a complete reannotation of the Arabidopsis thaliana reference genome.</title>
        <authorList>
            <person name="Cheng C.Y."/>
            <person name="Krishnakumar V."/>
            <person name="Chan A.P."/>
            <person name="Thibaud-Nissen F."/>
            <person name="Schobel S."/>
            <person name="Town C.D."/>
        </authorList>
    </citation>
    <scope>GENOME REANNOTATION</scope>
    <source>
        <strain>cv. Columbia</strain>
    </source>
</reference>
<reference key="3">
    <citation type="journal article" date="2003" name="Science">
        <title>Empirical analysis of transcriptional activity in the Arabidopsis genome.</title>
        <authorList>
            <person name="Yamada K."/>
            <person name="Lim J."/>
            <person name="Dale J.M."/>
            <person name="Chen H."/>
            <person name="Shinn P."/>
            <person name="Palm C.J."/>
            <person name="Southwick A.M."/>
            <person name="Wu H.C."/>
            <person name="Kim C.J."/>
            <person name="Nguyen M."/>
            <person name="Pham P.K."/>
            <person name="Cheuk R.F."/>
            <person name="Karlin-Newmann G."/>
            <person name="Liu S.X."/>
            <person name="Lam B."/>
            <person name="Sakano H."/>
            <person name="Wu T."/>
            <person name="Yu G."/>
            <person name="Miranda M."/>
            <person name="Quach H.L."/>
            <person name="Tripp M."/>
            <person name="Chang C.H."/>
            <person name="Lee J.M."/>
            <person name="Toriumi M.J."/>
            <person name="Chan M.M."/>
            <person name="Tang C.C."/>
            <person name="Onodera C.S."/>
            <person name="Deng J.M."/>
            <person name="Akiyama K."/>
            <person name="Ansari Y."/>
            <person name="Arakawa T."/>
            <person name="Banh J."/>
            <person name="Banno F."/>
            <person name="Bowser L."/>
            <person name="Brooks S.Y."/>
            <person name="Carninci P."/>
            <person name="Chao Q."/>
            <person name="Choy N."/>
            <person name="Enju A."/>
            <person name="Goldsmith A.D."/>
            <person name="Gurjal M."/>
            <person name="Hansen N.F."/>
            <person name="Hayashizaki Y."/>
            <person name="Johnson-Hopson C."/>
            <person name="Hsuan V.W."/>
            <person name="Iida K."/>
            <person name="Karnes M."/>
            <person name="Khan S."/>
            <person name="Koesema E."/>
            <person name="Ishida J."/>
            <person name="Jiang P.X."/>
            <person name="Jones T."/>
            <person name="Kawai J."/>
            <person name="Kamiya A."/>
            <person name="Meyers C."/>
            <person name="Nakajima M."/>
            <person name="Narusaka M."/>
            <person name="Seki M."/>
            <person name="Sakurai T."/>
            <person name="Satou M."/>
            <person name="Tamse R."/>
            <person name="Vaysberg M."/>
            <person name="Wallender E.K."/>
            <person name="Wong C."/>
            <person name="Yamamura Y."/>
            <person name="Yuan S."/>
            <person name="Shinozaki K."/>
            <person name="Davis R.W."/>
            <person name="Theologis A."/>
            <person name="Ecker J.R."/>
        </authorList>
    </citation>
    <scope>NUCLEOTIDE SEQUENCE [LARGE SCALE MRNA]</scope>
    <source>
        <strain>cv. Columbia</strain>
    </source>
</reference>
<reference key="4">
    <citation type="journal article" date="1997" name="Proc. Natl. Acad. Sci. U.S.A.">
        <title>The AP2 domain of APETALA2 defines a large new family of DNA binding proteins in Arabidopsis.</title>
        <authorList>
            <person name="Okamuro J.K."/>
            <person name="Caster B."/>
            <person name="Villarroel R."/>
            <person name="Van Montagu M."/>
            <person name="Jofuku K.D."/>
        </authorList>
    </citation>
    <scope>NUCLEOTIDE SEQUENCE [MRNA] OF 29-192</scope>
</reference>
<reference key="5">
    <citation type="journal article" date="2004" name="Plant J.">
        <title>Activation of a COI1-dependent pathway in Arabidopsis by Pseudomonas syringae type III effectors and coronatine.</title>
        <authorList>
            <person name="He P."/>
            <person name="Chintamanani S."/>
            <person name="Chen Z."/>
            <person name="Zhu L."/>
            <person name="Kunkel B.N."/>
            <person name="Alfano J.R."/>
            <person name="Tang X."/>
            <person name="Zhou J.-M."/>
        </authorList>
    </citation>
    <scope>INDUCTION</scope>
</reference>
<reference key="6">
    <citation type="journal article" date="2006" name="Plant Physiol.">
        <title>Genome-wide analysis of the ERF gene family in Arabidopsis and rice.</title>
        <authorList>
            <person name="Nakano T."/>
            <person name="Suzuki K."/>
            <person name="Fujimura T."/>
            <person name="Shinshi H."/>
        </authorList>
    </citation>
    <scope>GENE FAMILY</scope>
    <scope>NOMENCLATURE</scope>
</reference>
<reference key="7">
    <citation type="journal article" date="2008" name="Plant Cell Rep.">
        <title>Identification and characterization of COI1-dependent transcription factor genes involved in JA-mediated response to wounding in Arabidopsis plants.</title>
        <authorList>
            <person name="Wang Z."/>
            <person name="Cao G."/>
            <person name="Wang X."/>
            <person name="Miao J."/>
            <person name="Liu X."/>
            <person name="Chen Z."/>
            <person name="Qu L.-J."/>
            <person name="Gu H."/>
        </authorList>
    </citation>
    <scope>INDUCTION</scope>
</reference>
<reference key="8">
    <citation type="journal article" date="2010" name="Gene">
        <title>The Arabidopsis AP2/ERF transcription factor RAP2.6 participates in ABA, salt and osmotic stress responses.</title>
        <authorList>
            <person name="Zhu Q."/>
            <person name="Zhang J."/>
            <person name="Gao X."/>
            <person name="Tong J."/>
            <person name="Xiao L."/>
            <person name="Li W."/>
            <person name="Zhang H."/>
        </authorList>
    </citation>
    <scope>FUNCTION</scope>
    <scope>SUBCELLULAR LOCATION</scope>
    <scope>TISSUE SPECIFICITY</scope>
    <scope>INDUCTION</scope>
</reference>
<reference key="9">
    <citation type="journal article" date="2011" name="Plant Mol. Biol.">
        <title>Functional characterization of four APETALA2-family genes (RAP2.6, RAP2.6L, DREB19 and DREB26) in Arabidopsis.</title>
        <authorList>
            <person name="Krishnaswamy S."/>
            <person name="Verma S."/>
            <person name="Rahman M.H."/>
            <person name="Kav N.N."/>
        </authorList>
    </citation>
    <scope>FUNCTION</scope>
    <scope>TISSUE SPECIFICITY</scope>
    <scope>INDUCTION</scope>
</reference>
<reference key="10">
    <citation type="journal article" date="2013" name="BMC Plant Biol.">
        <title>Overexpression of the transcription factor RAP2.6 leads to enhanced callose deposition in syncytia and enhanced resistance against the beet cyst nematode Heterodera schachtii in Arabidopsis roots.</title>
        <authorList>
            <person name="Ali M.A."/>
            <person name="Abbas A."/>
            <person name="Kreil D.P."/>
            <person name="Bohlmann H."/>
        </authorList>
    </citation>
    <scope>FUNCTION</scope>
    <scope>TISSUE SPECIFICITY</scope>
    <scope>INDUCTION</scope>
</reference>
<organism>
    <name type="scientific">Arabidopsis thaliana</name>
    <name type="common">Mouse-ear cress</name>
    <dbReference type="NCBI Taxonomy" id="3702"/>
    <lineage>
        <taxon>Eukaryota</taxon>
        <taxon>Viridiplantae</taxon>
        <taxon>Streptophyta</taxon>
        <taxon>Embryophyta</taxon>
        <taxon>Tracheophyta</taxon>
        <taxon>Spermatophyta</taxon>
        <taxon>Magnoliopsida</taxon>
        <taxon>eudicotyledons</taxon>
        <taxon>Gunneridae</taxon>
        <taxon>Pentapetalae</taxon>
        <taxon>rosids</taxon>
        <taxon>malvids</taxon>
        <taxon>Brassicales</taxon>
        <taxon>Brassicaceae</taxon>
        <taxon>Camelineae</taxon>
        <taxon>Arabidopsis</taxon>
    </lineage>
</organism>
<evidence type="ECO:0000255" key="1">
    <source>
        <dbReference type="PROSITE-ProRule" id="PRU00366"/>
    </source>
</evidence>
<evidence type="ECO:0000256" key="2">
    <source>
        <dbReference type="SAM" id="MobiDB-lite"/>
    </source>
</evidence>
<evidence type="ECO:0000269" key="3">
    <source>
    </source>
</evidence>
<evidence type="ECO:0000269" key="4">
    <source>
    </source>
</evidence>
<evidence type="ECO:0000269" key="5">
    <source>
    </source>
</evidence>
<evidence type="ECO:0000269" key="6">
    <source>
    </source>
</evidence>
<evidence type="ECO:0000269" key="7">
    <source>
    </source>
</evidence>
<evidence type="ECO:0000305" key="8"/>
<sequence>MVSMLTNVVSGETEPSASATWTMGHKREREEFSLPPQPLITGSAVTKECESSMSLERPKKYRGVRQRPWGKWAAEIRDPHKATRVWLGTFETAEAAARAYDAAALRFRGSKAKLNFPENVGTQTIQRNSHFLQNSMQPSLTYIDQCPTLLSYSRCMEQQQPLVGMLQPTEEENHFFEKPWTEYDQYNYSSFG</sequence>
<feature type="chain" id="PRO_0000297935" description="Ethylene-responsive transcription factor RAP2-6">
    <location>
        <begin position="1"/>
        <end position="192"/>
    </location>
</feature>
<feature type="DNA-binding region" description="AP2/ERF" evidence="1">
    <location>
        <begin position="60"/>
        <end position="117"/>
    </location>
</feature>
<feature type="region of interest" description="Disordered" evidence="2">
    <location>
        <begin position="1"/>
        <end position="20"/>
    </location>
</feature>
<dbReference type="EMBL" id="AC005687">
    <property type="protein sequence ID" value="AAC36019.1"/>
    <property type="molecule type" value="Genomic_DNA"/>
</dbReference>
<dbReference type="EMBL" id="CP002684">
    <property type="protein sequence ID" value="AEE31950.1"/>
    <property type="molecule type" value="Genomic_DNA"/>
</dbReference>
<dbReference type="EMBL" id="AY062847">
    <property type="protein sequence ID" value="AAL32925.1"/>
    <property type="molecule type" value="mRNA"/>
</dbReference>
<dbReference type="EMBL" id="AY114582">
    <property type="protein sequence ID" value="AAM47901.1"/>
    <property type="molecule type" value="mRNA"/>
</dbReference>
<dbReference type="EMBL" id="AF003099">
    <property type="protein sequence ID" value="AAC49772.1"/>
    <property type="molecule type" value="mRNA"/>
</dbReference>
<dbReference type="PIR" id="D96498">
    <property type="entry name" value="D96498"/>
</dbReference>
<dbReference type="RefSeq" id="NP_175008.1">
    <property type="nucleotide sequence ID" value="NM_103468.4"/>
</dbReference>
<dbReference type="SMR" id="Q7G1L2"/>
<dbReference type="BioGRID" id="26140">
    <property type="interactions" value="5"/>
</dbReference>
<dbReference type="FunCoup" id="Q7G1L2">
    <property type="interactions" value="1"/>
</dbReference>
<dbReference type="IntAct" id="Q7G1L2">
    <property type="interactions" value="6"/>
</dbReference>
<dbReference type="STRING" id="3702.Q7G1L2"/>
<dbReference type="PaxDb" id="3702-AT1G43160.1"/>
<dbReference type="ProteomicsDB" id="236471"/>
<dbReference type="EnsemblPlants" id="AT1G43160.1">
    <property type="protein sequence ID" value="AT1G43160.1"/>
    <property type="gene ID" value="AT1G43160"/>
</dbReference>
<dbReference type="GeneID" id="840915"/>
<dbReference type="Gramene" id="AT1G43160.1">
    <property type="protein sequence ID" value="AT1G43160.1"/>
    <property type="gene ID" value="AT1G43160"/>
</dbReference>
<dbReference type="KEGG" id="ath:AT1G43160"/>
<dbReference type="Araport" id="AT1G43160"/>
<dbReference type="TAIR" id="AT1G43160">
    <property type="gene designation" value="RAP2.6"/>
</dbReference>
<dbReference type="eggNOG" id="ENOG502QV3S">
    <property type="taxonomic scope" value="Eukaryota"/>
</dbReference>
<dbReference type="HOGENOM" id="CLU_054468_2_0_1"/>
<dbReference type="InParanoid" id="Q7G1L2"/>
<dbReference type="PhylomeDB" id="Q7G1L2"/>
<dbReference type="PRO" id="PR:Q7G1L2"/>
<dbReference type="Proteomes" id="UP000006548">
    <property type="component" value="Chromosome 1"/>
</dbReference>
<dbReference type="ExpressionAtlas" id="Q7G1L2">
    <property type="expression patterns" value="baseline and differential"/>
</dbReference>
<dbReference type="GO" id="GO:0005634">
    <property type="term" value="C:nucleus"/>
    <property type="evidence" value="ECO:0000314"/>
    <property type="project" value="TAIR"/>
</dbReference>
<dbReference type="GO" id="GO:0003677">
    <property type="term" value="F:DNA binding"/>
    <property type="evidence" value="ECO:0007669"/>
    <property type="project" value="UniProtKB-KW"/>
</dbReference>
<dbReference type="GO" id="GO:0003700">
    <property type="term" value="F:DNA-binding transcription factor activity"/>
    <property type="evidence" value="ECO:0000250"/>
    <property type="project" value="TAIR"/>
</dbReference>
<dbReference type="GO" id="GO:0034605">
    <property type="term" value="P:cellular response to heat"/>
    <property type="evidence" value="ECO:0000270"/>
    <property type="project" value="TAIR"/>
</dbReference>
<dbReference type="GO" id="GO:0009658">
    <property type="term" value="P:chloroplast organization"/>
    <property type="evidence" value="ECO:0000315"/>
    <property type="project" value="TAIR"/>
</dbReference>
<dbReference type="GO" id="GO:0006952">
    <property type="term" value="P:defense response"/>
    <property type="evidence" value="ECO:0007669"/>
    <property type="project" value="UniProtKB-KW"/>
</dbReference>
<dbReference type="GO" id="GO:0009873">
    <property type="term" value="P:ethylene-activated signaling pathway"/>
    <property type="evidence" value="ECO:0007669"/>
    <property type="project" value="UniProtKB-KW"/>
</dbReference>
<dbReference type="GO" id="GO:0045893">
    <property type="term" value="P:positive regulation of DNA-templated transcription"/>
    <property type="evidence" value="ECO:0000314"/>
    <property type="project" value="TAIR"/>
</dbReference>
<dbReference type="GO" id="GO:0009737">
    <property type="term" value="P:response to abscisic acid"/>
    <property type="evidence" value="ECO:0000270"/>
    <property type="project" value="TAIR"/>
</dbReference>
<dbReference type="GO" id="GO:0009409">
    <property type="term" value="P:response to cold"/>
    <property type="evidence" value="ECO:0000270"/>
    <property type="project" value="TAIR"/>
</dbReference>
<dbReference type="GO" id="GO:0009753">
    <property type="term" value="P:response to jasmonic acid"/>
    <property type="evidence" value="ECO:0000270"/>
    <property type="project" value="TAIR"/>
</dbReference>
<dbReference type="GO" id="GO:0006970">
    <property type="term" value="P:response to osmotic stress"/>
    <property type="evidence" value="ECO:0000270"/>
    <property type="project" value="TAIR"/>
</dbReference>
<dbReference type="GO" id="GO:0009751">
    <property type="term" value="P:response to salicylic acid"/>
    <property type="evidence" value="ECO:0000270"/>
    <property type="project" value="TAIR"/>
</dbReference>
<dbReference type="GO" id="GO:0009651">
    <property type="term" value="P:response to salt stress"/>
    <property type="evidence" value="ECO:0000315"/>
    <property type="project" value="TAIR"/>
</dbReference>
<dbReference type="GO" id="GO:0009414">
    <property type="term" value="P:response to water deprivation"/>
    <property type="evidence" value="ECO:0000270"/>
    <property type="project" value="TAIR"/>
</dbReference>
<dbReference type="GO" id="GO:0009611">
    <property type="term" value="P:response to wounding"/>
    <property type="evidence" value="ECO:0000270"/>
    <property type="project" value="TAIR"/>
</dbReference>
<dbReference type="CDD" id="cd00018">
    <property type="entry name" value="AP2"/>
    <property type="match status" value="1"/>
</dbReference>
<dbReference type="FunFam" id="3.30.730.10:FF:000001">
    <property type="entry name" value="Ethylene-responsive transcription factor 2"/>
    <property type="match status" value="1"/>
</dbReference>
<dbReference type="Gene3D" id="3.30.730.10">
    <property type="entry name" value="AP2/ERF domain"/>
    <property type="match status" value="1"/>
</dbReference>
<dbReference type="InterPro" id="IPR001471">
    <property type="entry name" value="AP2/ERF_dom"/>
</dbReference>
<dbReference type="InterPro" id="IPR036955">
    <property type="entry name" value="AP2/ERF_dom_sf"/>
</dbReference>
<dbReference type="InterPro" id="IPR016177">
    <property type="entry name" value="DNA-bd_dom_sf"/>
</dbReference>
<dbReference type="InterPro" id="IPR044808">
    <property type="entry name" value="ERF_plant"/>
</dbReference>
<dbReference type="PANTHER" id="PTHR31190">
    <property type="entry name" value="DNA-BINDING DOMAIN"/>
    <property type="match status" value="1"/>
</dbReference>
<dbReference type="PANTHER" id="PTHR31190:SF445">
    <property type="entry name" value="ETHYLENE-RESPONSIVE TRANSCRIPTION FACTOR RAP2-6"/>
    <property type="match status" value="1"/>
</dbReference>
<dbReference type="Pfam" id="PF00847">
    <property type="entry name" value="AP2"/>
    <property type="match status" value="1"/>
</dbReference>
<dbReference type="PRINTS" id="PR00367">
    <property type="entry name" value="ETHRSPELEMNT"/>
</dbReference>
<dbReference type="SMART" id="SM00380">
    <property type="entry name" value="AP2"/>
    <property type="match status" value="1"/>
</dbReference>
<dbReference type="SUPFAM" id="SSF54171">
    <property type="entry name" value="DNA-binding domain"/>
    <property type="match status" value="1"/>
</dbReference>
<dbReference type="PROSITE" id="PS51032">
    <property type="entry name" value="AP2_ERF"/>
    <property type="match status" value="1"/>
</dbReference>
<comment type="function">
    <text evidence="5 6 7">Transcriptional activator involved in the regulation of plant development and tolerance to abiotic stresses (PubMed:21069430). Binds to the GCC-box pathogenesis-related promoter element and the cis-element CE1 (coupling element 1). Involved in the regulation of gene expression in response to abiotic stresses, possibly through the abscisic acid (ABA) signaling pathway (PubMed:20193749). Involved in resistance to the beet cyst nematode Heterodera schachtii in roots. May promote callose deposition at syncytia which may interfere with nutrient import into syncytia and inhibit the development of nematodes (PubMed:23510309).</text>
</comment>
<comment type="subcellular location">
    <subcellularLocation>
        <location evidence="1 5">Nucleus</location>
    </subcellularLocation>
</comment>
<comment type="tissue specificity">
    <text evidence="5 6 7">Expressed in petals, carpels and valves of immature siliques (PubMed:21069430). Expressed at high levels in stems. Expressed in roots, rosette leaves, flowers and siliques (PubMed:20193749, PubMed:23510309).</text>
</comment>
<comment type="induction">
    <text evidence="3 4 5 6 7">Induced by salt, heat and drought stresses (PubMed:21069430). Induced by osmotic stress (PubMed:20193749). Induced by jasmonate (JA) (PubMed:14756769, PubMed:17786451, PubMed:21069430). Induced by salicylic acid (SA) (PubMed:14756769, PubMed:21069430). Induced by abscisic acid (ABA) (PubMed:20193749, PubMed:21069430). Induced by ethylene (PubMed:14756769). Induced by infection with the bacterial pathogen Pseudomonas syringae pv. tomato DC3000 (PubMed:14756769, PubMed:23510309). Induced by the bacterial pathogen Pseudomonas syringae pv. maculicola ES4326 (PubMed:14756769). Induced by wounding (PubMed:17786451). Down-regulated by infection with the beet cyst nematode Heterodera schachtii (PubMed:23510309).</text>
</comment>
<comment type="similarity">
    <text evidence="8">Belongs to the AP2/ERF transcription factor family. ERF subfamily.</text>
</comment>
<name>RAP26_ARATH</name>
<protein>
    <recommendedName>
        <fullName>Ethylene-responsive transcription factor RAP2-6</fullName>
    </recommendedName>
    <alternativeName>
        <fullName>Protein RELATED TO APETALA2 6</fullName>
    </alternativeName>
</protein>
<gene>
    <name type="primary">RAP2-6</name>
    <name type="synonym">ERF108</name>
    <name type="ordered locus">At1g43160</name>
    <name type="ORF">F1I21.18</name>
</gene>
<accession>Q7G1L2</accession>
<accession>O23108</accession>